<feature type="chain" id="PRO_1000213261" description="ATP phosphoribosyltransferase">
    <location>
        <begin position="1"/>
        <end position="219"/>
    </location>
</feature>
<reference key="1">
    <citation type="submission" date="2005-09" db="EMBL/GenBank/DDBJ databases">
        <title>Complete genome sequence of Clostridium kluyveri and comparative genomics of Clostridia species.</title>
        <authorList>
            <person name="Inui M."/>
            <person name="Nonaka H."/>
            <person name="Shinoda Y."/>
            <person name="Ikenaga Y."/>
            <person name="Abe M."/>
            <person name="Naito K."/>
            <person name="Vertes A.A."/>
            <person name="Yukawa H."/>
        </authorList>
    </citation>
    <scope>NUCLEOTIDE SEQUENCE [LARGE SCALE GENOMIC DNA]</scope>
    <source>
        <strain>NBRC 12016</strain>
    </source>
</reference>
<comment type="function">
    <text evidence="1">Catalyzes the condensation of ATP and 5-phosphoribose 1-diphosphate to form N'-(5'-phosphoribosyl)-ATP (PR-ATP). Has a crucial role in the pathway because the rate of histidine biosynthesis seems to be controlled primarily by regulation of HisG enzymatic activity.</text>
</comment>
<comment type="catalytic activity">
    <reaction evidence="1">
        <text>1-(5-phospho-beta-D-ribosyl)-ATP + diphosphate = 5-phospho-alpha-D-ribose 1-diphosphate + ATP</text>
        <dbReference type="Rhea" id="RHEA:18473"/>
        <dbReference type="ChEBI" id="CHEBI:30616"/>
        <dbReference type="ChEBI" id="CHEBI:33019"/>
        <dbReference type="ChEBI" id="CHEBI:58017"/>
        <dbReference type="ChEBI" id="CHEBI:73183"/>
        <dbReference type="EC" id="2.4.2.17"/>
    </reaction>
</comment>
<comment type="pathway">
    <text evidence="1">Amino-acid biosynthesis; L-histidine biosynthesis; L-histidine from 5-phospho-alpha-D-ribose 1-diphosphate: step 1/9.</text>
</comment>
<comment type="subunit">
    <text evidence="1">Heteromultimer composed of HisG and HisZ subunits.</text>
</comment>
<comment type="subcellular location">
    <subcellularLocation>
        <location evidence="1">Cytoplasm</location>
    </subcellularLocation>
</comment>
<comment type="domain">
    <text>Lacks the C-terminal regulatory region which is replaced by HisZ.</text>
</comment>
<comment type="similarity">
    <text evidence="1">Belongs to the ATP phosphoribosyltransferase family. Short subfamily.</text>
</comment>
<sequence length="219" mass="24564">MDGERKIKIALTKGRIEKEAVKIFERAGVDCSEVINKGRKLIFHNMESNIDFVLVKAPDVLTYVEHGVVDIGIVGKDTLLEQDKNFYEVLDLGFGKCKFSLAGLKDSNFYSGYNRKKIATKYPNVARSYFRKLGQDVEIIKIEGSVELAPILGLADAIVDIVETGSTLKENGLVIYKDICSISARMVVNMASMKMKKEEIEKIINKVQVQINEIEKAVR</sequence>
<gene>
    <name evidence="1" type="primary">hisG</name>
    <name type="ordered locus">CKR_1190</name>
</gene>
<name>HIS1_CLOK1</name>
<dbReference type="EC" id="2.4.2.17" evidence="1"/>
<dbReference type="EMBL" id="AP009049">
    <property type="protein sequence ID" value="BAH06241.1"/>
    <property type="molecule type" value="Genomic_DNA"/>
</dbReference>
<dbReference type="RefSeq" id="WP_012101681.1">
    <property type="nucleotide sequence ID" value="NC_011837.1"/>
</dbReference>
<dbReference type="SMR" id="B9E166"/>
<dbReference type="KEGG" id="ckr:CKR_1190"/>
<dbReference type="HOGENOM" id="CLU_038115_2_0_9"/>
<dbReference type="UniPathway" id="UPA00031">
    <property type="reaction ID" value="UER00006"/>
</dbReference>
<dbReference type="Proteomes" id="UP000007969">
    <property type="component" value="Chromosome"/>
</dbReference>
<dbReference type="GO" id="GO:0005737">
    <property type="term" value="C:cytoplasm"/>
    <property type="evidence" value="ECO:0007669"/>
    <property type="project" value="UniProtKB-SubCell"/>
</dbReference>
<dbReference type="GO" id="GO:0005524">
    <property type="term" value="F:ATP binding"/>
    <property type="evidence" value="ECO:0007669"/>
    <property type="project" value="UniProtKB-KW"/>
</dbReference>
<dbReference type="GO" id="GO:0003879">
    <property type="term" value="F:ATP phosphoribosyltransferase activity"/>
    <property type="evidence" value="ECO:0007669"/>
    <property type="project" value="UniProtKB-UniRule"/>
</dbReference>
<dbReference type="GO" id="GO:0000105">
    <property type="term" value="P:L-histidine biosynthetic process"/>
    <property type="evidence" value="ECO:0007669"/>
    <property type="project" value="UniProtKB-UniRule"/>
</dbReference>
<dbReference type="CDD" id="cd13595">
    <property type="entry name" value="PBP2_HisGs"/>
    <property type="match status" value="1"/>
</dbReference>
<dbReference type="FunFam" id="3.40.190.10:FF:000008">
    <property type="entry name" value="ATP phosphoribosyltransferase"/>
    <property type="match status" value="1"/>
</dbReference>
<dbReference type="FunFam" id="3.40.190.10:FF:000011">
    <property type="entry name" value="ATP phosphoribosyltransferase"/>
    <property type="match status" value="1"/>
</dbReference>
<dbReference type="Gene3D" id="3.40.190.10">
    <property type="entry name" value="Periplasmic binding protein-like II"/>
    <property type="match status" value="2"/>
</dbReference>
<dbReference type="HAMAP" id="MF_01018">
    <property type="entry name" value="HisG_Short"/>
    <property type="match status" value="1"/>
</dbReference>
<dbReference type="InterPro" id="IPR013820">
    <property type="entry name" value="ATP_PRibTrfase_cat"/>
</dbReference>
<dbReference type="InterPro" id="IPR018198">
    <property type="entry name" value="ATP_PRibTrfase_CS"/>
</dbReference>
<dbReference type="InterPro" id="IPR001348">
    <property type="entry name" value="ATP_PRibTrfase_HisG"/>
</dbReference>
<dbReference type="InterPro" id="IPR024893">
    <property type="entry name" value="ATP_PRibTrfase_HisG_short"/>
</dbReference>
<dbReference type="NCBIfam" id="TIGR00070">
    <property type="entry name" value="hisG"/>
    <property type="match status" value="1"/>
</dbReference>
<dbReference type="PANTHER" id="PTHR21403:SF8">
    <property type="entry name" value="ATP PHOSPHORIBOSYLTRANSFERASE"/>
    <property type="match status" value="1"/>
</dbReference>
<dbReference type="PANTHER" id="PTHR21403">
    <property type="entry name" value="ATP PHOSPHORIBOSYLTRANSFERASE ATP-PRTASE"/>
    <property type="match status" value="1"/>
</dbReference>
<dbReference type="Pfam" id="PF01634">
    <property type="entry name" value="HisG"/>
    <property type="match status" value="1"/>
</dbReference>
<dbReference type="SUPFAM" id="SSF53850">
    <property type="entry name" value="Periplasmic binding protein-like II"/>
    <property type="match status" value="1"/>
</dbReference>
<dbReference type="PROSITE" id="PS01316">
    <property type="entry name" value="ATP_P_PHORIBOSYLTR"/>
    <property type="match status" value="1"/>
</dbReference>
<accession>B9E166</accession>
<protein>
    <recommendedName>
        <fullName evidence="1">ATP phosphoribosyltransferase</fullName>
        <shortName evidence="1">ATP-PRT</shortName>
        <shortName evidence="1">ATP-PRTase</shortName>
        <ecNumber evidence="1">2.4.2.17</ecNumber>
    </recommendedName>
</protein>
<evidence type="ECO:0000255" key="1">
    <source>
        <dbReference type="HAMAP-Rule" id="MF_01018"/>
    </source>
</evidence>
<organism>
    <name type="scientific">Clostridium kluyveri (strain NBRC 12016)</name>
    <dbReference type="NCBI Taxonomy" id="583346"/>
    <lineage>
        <taxon>Bacteria</taxon>
        <taxon>Bacillati</taxon>
        <taxon>Bacillota</taxon>
        <taxon>Clostridia</taxon>
        <taxon>Eubacteriales</taxon>
        <taxon>Clostridiaceae</taxon>
        <taxon>Clostridium</taxon>
    </lineage>
</organism>
<keyword id="KW-0028">Amino-acid biosynthesis</keyword>
<keyword id="KW-0067">ATP-binding</keyword>
<keyword id="KW-0963">Cytoplasm</keyword>
<keyword id="KW-0328">Glycosyltransferase</keyword>
<keyword id="KW-0368">Histidine biosynthesis</keyword>
<keyword id="KW-0547">Nucleotide-binding</keyword>
<keyword id="KW-0808">Transferase</keyword>
<proteinExistence type="inferred from homology"/>